<accession>Q9N5L4</accession>
<evidence type="ECO:0000250" key="1">
    <source>
        <dbReference type="UniProtKB" id="Q86W56"/>
    </source>
</evidence>
<evidence type="ECO:0000269" key="2">
    <source>
    </source>
</evidence>
<evidence type="ECO:0000305" key="3"/>
<evidence type="ECO:0000312" key="4">
    <source>
        <dbReference type="WormBase" id="H23L24.5"/>
    </source>
</evidence>
<dbReference type="EC" id="3.2.1.143" evidence="2"/>
<dbReference type="EMBL" id="AF548468">
    <property type="protein sequence ID" value="AAN40699.1"/>
    <property type="molecule type" value="mRNA"/>
</dbReference>
<dbReference type="EMBL" id="FO081083">
    <property type="protein sequence ID" value="CCD68980.1"/>
    <property type="molecule type" value="Genomic_DNA"/>
</dbReference>
<dbReference type="RefSeq" id="NP_501496.2">
    <property type="nucleotide sequence ID" value="NM_069095.3"/>
</dbReference>
<dbReference type="SMR" id="Q9N5L4"/>
<dbReference type="BioGRID" id="51485">
    <property type="interactions" value="1"/>
</dbReference>
<dbReference type="FunCoup" id="Q9N5L4">
    <property type="interactions" value="132"/>
</dbReference>
<dbReference type="STRING" id="6239.H23L24.5.1"/>
<dbReference type="PaxDb" id="6239-H23L24.5"/>
<dbReference type="PeptideAtlas" id="Q9N5L4"/>
<dbReference type="EnsemblMetazoa" id="H23L24.5.1">
    <property type="protein sequence ID" value="H23L24.5.1"/>
    <property type="gene ID" value="WBGene00004052"/>
</dbReference>
<dbReference type="GeneID" id="186765"/>
<dbReference type="KEGG" id="cel:CELE_H23L24.5"/>
<dbReference type="UCSC" id="H23L24.5">
    <property type="organism name" value="c. elegans"/>
</dbReference>
<dbReference type="AGR" id="WB:WBGene00004052"/>
<dbReference type="CTD" id="186765"/>
<dbReference type="WormBase" id="H23L24.5">
    <property type="protein sequence ID" value="CE32685"/>
    <property type="gene ID" value="WBGene00004052"/>
    <property type="gene designation" value="parg-2"/>
</dbReference>
<dbReference type="eggNOG" id="KOG2064">
    <property type="taxonomic scope" value="Eukaryota"/>
</dbReference>
<dbReference type="GeneTree" id="ENSGT00390000003652"/>
<dbReference type="HOGENOM" id="CLU_013388_4_0_1"/>
<dbReference type="InParanoid" id="Q9N5L4"/>
<dbReference type="OMA" id="RICRCMP"/>
<dbReference type="OrthoDB" id="1937899at2759"/>
<dbReference type="PhylomeDB" id="Q9N5L4"/>
<dbReference type="BRENDA" id="3.2.1.143">
    <property type="organism ID" value="1045"/>
</dbReference>
<dbReference type="PRO" id="PR:Q9N5L4"/>
<dbReference type="Proteomes" id="UP000001940">
    <property type="component" value="Chromosome IV"/>
</dbReference>
<dbReference type="Bgee" id="WBGene00004052">
    <property type="expression patterns" value="Expressed in material anatomical entity and 2 other cell types or tissues"/>
</dbReference>
<dbReference type="GO" id="GO:0005737">
    <property type="term" value="C:cytoplasm"/>
    <property type="evidence" value="ECO:0000314"/>
    <property type="project" value="WormBase"/>
</dbReference>
<dbReference type="GO" id="GO:0005634">
    <property type="term" value="C:nucleus"/>
    <property type="evidence" value="ECO:0000318"/>
    <property type="project" value="GO_Central"/>
</dbReference>
<dbReference type="GO" id="GO:0004649">
    <property type="term" value="F:poly(ADP-ribose) glycohydrolase activity"/>
    <property type="evidence" value="ECO:0000314"/>
    <property type="project" value="WormBase"/>
</dbReference>
<dbReference type="GO" id="GO:1990966">
    <property type="term" value="P:ATP generation from poly-ADP-D-ribose"/>
    <property type="evidence" value="ECO:0000318"/>
    <property type="project" value="GO_Central"/>
</dbReference>
<dbReference type="GO" id="GO:0005975">
    <property type="term" value="P:carbohydrate metabolic process"/>
    <property type="evidence" value="ECO:0007669"/>
    <property type="project" value="InterPro"/>
</dbReference>
<dbReference type="GO" id="GO:0006974">
    <property type="term" value="P:DNA damage response"/>
    <property type="evidence" value="ECO:0007669"/>
    <property type="project" value="UniProtKB-KW"/>
</dbReference>
<dbReference type="GO" id="GO:0009225">
    <property type="term" value="P:nucleotide-sugar metabolic process"/>
    <property type="evidence" value="ECO:0000314"/>
    <property type="project" value="WormBase"/>
</dbReference>
<dbReference type="GO" id="GO:0006282">
    <property type="term" value="P:regulation of DNA repair"/>
    <property type="evidence" value="ECO:0000318"/>
    <property type="project" value="GO_Central"/>
</dbReference>
<dbReference type="GO" id="GO:0010332">
    <property type="term" value="P:response to gamma radiation"/>
    <property type="evidence" value="ECO:0000315"/>
    <property type="project" value="WormBase"/>
</dbReference>
<dbReference type="InterPro" id="IPR046372">
    <property type="entry name" value="PARG_cat_C"/>
</dbReference>
<dbReference type="InterPro" id="IPR048362">
    <property type="entry name" value="PARG_helical"/>
</dbReference>
<dbReference type="InterPro" id="IPR007724">
    <property type="entry name" value="Poly_GlycHdrlase"/>
</dbReference>
<dbReference type="PANTHER" id="PTHR12837">
    <property type="entry name" value="POLY ADP-RIBOSE GLYCOHYDROLASE"/>
    <property type="match status" value="1"/>
</dbReference>
<dbReference type="PANTHER" id="PTHR12837:SF15">
    <property type="entry name" value="POLY(ADP-RIBOSE) GLYCOHYDROLASE"/>
    <property type="match status" value="1"/>
</dbReference>
<dbReference type="Pfam" id="PF05028">
    <property type="entry name" value="PARG_cat_C"/>
    <property type="match status" value="1"/>
</dbReference>
<dbReference type="Pfam" id="PF20811">
    <property type="entry name" value="PARG_cat_N"/>
    <property type="match status" value="1"/>
</dbReference>
<organism>
    <name type="scientific">Caenorhabditis elegans</name>
    <dbReference type="NCBI Taxonomy" id="6239"/>
    <lineage>
        <taxon>Eukaryota</taxon>
        <taxon>Metazoa</taxon>
        <taxon>Ecdysozoa</taxon>
        <taxon>Nematoda</taxon>
        <taxon>Chromadorea</taxon>
        <taxon>Rhabditida</taxon>
        <taxon>Rhabditina</taxon>
        <taxon>Rhabditomorpha</taxon>
        <taxon>Rhabditoidea</taxon>
        <taxon>Rhabditidae</taxon>
        <taxon>Peloderinae</taxon>
        <taxon>Caenorhabditis</taxon>
    </lineage>
</organism>
<feature type="chain" id="PRO_0000066606" description="Poly(ADP-ribose) glycohydrolase 2" evidence="3">
    <location>
        <begin position="1"/>
        <end position="485"/>
    </location>
</feature>
<feature type="mutagenesis site" description="Reduced poly(ADP-ribose) glycohydrolase activity in vitro." evidence="2">
    <original>D</original>
    <variation>N</variation>
    <location>
        <position position="253"/>
    </location>
</feature>
<feature type="mutagenesis site" description="No poly(ADP-ribose) glycohydrolase activity in vitro." evidence="2">
    <original>E</original>
    <variation>N</variation>
    <location>
        <position position="271"/>
    </location>
</feature>
<feature type="mutagenesis site" description="No poly(ADP-ribose) glycohydrolase activity in vitro." evidence="2">
    <original>E</original>
    <variation>N</variation>
    <location>
        <position position="272"/>
    </location>
</feature>
<feature type="mutagenesis site" description="Little poly(ADP-ribose) glycohydrolase activity in vitro." evidence="2">
    <original>Y</original>
    <variation>A</variation>
    <location>
        <position position="311"/>
    </location>
</feature>
<name>PARG2_CAEEL</name>
<keyword id="KW-0963">Cytoplasm</keyword>
<keyword id="KW-0227">DNA damage</keyword>
<keyword id="KW-0378">Hydrolase</keyword>
<keyword id="KW-1185">Reference proteome</keyword>
<reference key="1">
    <citation type="journal article" date="2007" name="DNA Repair">
        <title>Altered DNA damage response in Caenorhabditis elegans with impaired poly(ADP-ribose) glycohydrolases genes expression.</title>
        <authorList>
            <person name="St-Laurent J.F."/>
            <person name="Gagnon S.N."/>
            <person name="Dequen F."/>
            <person name="Hardy I."/>
            <person name="Desnoyers S."/>
        </authorList>
    </citation>
    <scope>NUCLEOTIDE SEQUENCE [MRNA]</scope>
    <scope>FUNCTION</scope>
    <scope>CATALYTIC ACTIVITY</scope>
    <scope>SUBCELLULAR LOCATION</scope>
    <scope>TISSUE SPECIFICITY</scope>
    <scope>DEVELOPMENTAL STAGE</scope>
    <scope>DISRUPTION PHENOTYPE</scope>
    <scope>MUTAGENESIS OF ASP-253; GLU-271; GLU-272 AND TYR-311</scope>
</reference>
<reference key="2">
    <citation type="journal article" date="1998" name="Science">
        <title>Genome sequence of the nematode C. elegans: a platform for investigating biology.</title>
        <authorList>
            <consortium name="The C. elegans sequencing consortium"/>
        </authorList>
    </citation>
    <scope>NUCLEOTIDE SEQUENCE [LARGE SCALE GENOMIC DNA]</scope>
    <source>
        <strain>Bristol N2</strain>
    </source>
</reference>
<gene>
    <name evidence="4" type="primary">parg-2</name>
    <name evidence="4" type="synonym">pme-4</name>
    <name evidence="4" type="ORF">H23L24.5</name>
</gene>
<protein>
    <recommendedName>
        <fullName evidence="4">Poly(ADP-ribose) glycohydrolase 2</fullName>
        <ecNumber evidence="2">3.2.1.143</ecNumber>
    </recommendedName>
    <alternativeName>
        <fullName>Poly ADP-ribose metabolism enzyme 4</fullName>
    </alternativeName>
</protein>
<comment type="function">
    <text evidence="1 2">Poly(ADP-ribose) synthesized after DNA damage is only present transiently and is rapidly degraded by poly(ADP-ribose) glycohydrolase (PubMed:17188026). Poly(ADP-ribose) metabolism may be required for maintenance of the normal function of neuronal cells (By similarity).</text>
</comment>
<comment type="catalytic activity">
    <reaction evidence="2">
        <text>[(1''-&gt;2')-ADP-alpha-D-ribose](n) + H2O = [(1''-&gt;2')-ADP-alpha-D-ribose](n-1) + ADP-D-ribose</text>
        <dbReference type="Rhea" id="RHEA:52216"/>
        <dbReference type="Rhea" id="RHEA-COMP:16922"/>
        <dbReference type="Rhea" id="RHEA-COMP:16923"/>
        <dbReference type="ChEBI" id="CHEBI:15377"/>
        <dbReference type="ChEBI" id="CHEBI:57967"/>
        <dbReference type="ChEBI" id="CHEBI:142512"/>
        <dbReference type="EC" id="3.2.1.143"/>
    </reaction>
</comment>
<comment type="subcellular location">
    <subcellularLocation>
        <location evidence="2">Cytoplasm</location>
    </subcellularLocation>
</comment>
<comment type="tissue specificity">
    <text evidence="2">Expressed in head and tail neurons.</text>
</comment>
<comment type="developmental stage">
    <text evidence="2">Expressed at all developmental stages.</text>
</comment>
<comment type="disruption phenotype">
    <text evidence="2">RNAi-mediated knockdown results in increased sensitivity to gamma irradiation.</text>
</comment>
<comment type="similarity">
    <text evidence="3">Belongs to the poly(ADP-ribose) glycohydrolase family.</text>
</comment>
<comment type="caution">
    <text evidence="2">Weak activity relative to mammalian poly(ADP-ribose) glycohydrolase orthologs.</text>
</comment>
<sequence>MDHENLMKYLEEFRSIRFQPDFQKVDAERNVRYCEITDFPISNISFELLETGVSQQWRNCDQNLFNEYLKTYKNGGYSQFEDLLFKIWGYSEEKERFDLPALKSFYRKMSEIVGEDEVLEKLARLVRITKSACEVLPEKIYRLVGDIESATFSHIQCASLIAWMFFSDTPRLSFIIILQKTTCVAVEKLKFLFTYFDKMSIDPPIGAVSFRKMRITHKQYLENWKLRETNLLPDVQVFDKMSIEETALCTQIDFANKRLGGGVLKGGAVQEEIRFMMCPEMMVAILLNDVTQDLEAISIVGAYVFSSYTGYSNTLKWAKITPKHSAQNNNSFRDQFGRLQTETVAIDAVRNAGTPLECLLNQLTTEKLTREVRKAAIGFLSAGDGFSKIPVVSGWWGCGAFRGNKPLKFLIQVIACGISDRPLQFCTFGDTELAKKCEEMMTLFRNNNVRTGQLFLIINSIGPPLNYSEQYVFDAIRAKINSTKA</sequence>
<proteinExistence type="evidence at protein level"/>